<protein>
    <recommendedName>
        <fullName evidence="1">Ketol-acid reductoisomerase (NADP(+))</fullName>
        <shortName evidence="1">KARI</shortName>
        <ecNumber evidence="1">1.1.1.86</ecNumber>
    </recommendedName>
    <alternativeName>
        <fullName evidence="1">Acetohydroxy-acid isomeroreductase</fullName>
        <shortName evidence="1">AHIR</shortName>
    </alternativeName>
    <alternativeName>
        <fullName evidence="1">Alpha-keto-beta-hydroxylacyl reductoisomerase</fullName>
    </alternativeName>
    <alternativeName>
        <fullName evidence="1">Ketol-acid reductoisomerase type 1</fullName>
    </alternativeName>
    <alternativeName>
        <fullName evidence="1">Ketol-acid reductoisomerase type I</fullName>
    </alternativeName>
</protein>
<feature type="chain" id="PRO_0000151394" description="Ketol-acid reductoisomerase (NADP(+))">
    <location>
        <begin position="1"/>
        <end position="330"/>
    </location>
</feature>
<feature type="domain" description="KARI N-terminal Rossmann" evidence="2">
    <location>
        <begin position="1"/>
        <end position="181"/>
    </location>
</feature>
<feature type="domain" description="KARI C-terminal knotted" evidence="3">
    <location>
        <begin position="182"/>
        <end position="327"/>
    </location>
</feature>
<feature type="active site" evidence="1">
    <location>
        <position position="107"/>
    </location>
</feature>
<feature type="binding site" evidence="1">
    <location>
        <begin position="24"/>
        <end position="27"/>
    </location>
    <ligand>
        <name>NADP(+)</name>
        <dbReference type="ChEBI" id="CHEBI:58349"/>
    </ligand>
</feature>
<feature type="binding site" evidence="1">
    <location>
        <position position="47"/>
    </location>
    <ligand>
        <name>NADP(+)</name>
        <dbReference type="ChEBI" id="CHEBI:58349"/>
    </ligand>
</feature>
<feature type="binding site" evidence="1">
    <location>
        <position position="52"/>
    </location>
    <ligand>
        <name>NADP(+)</name>
        <dbReference type="ChEBI" id="CHEBI:58349"/>
    </ligand>
</feature>
<feature type="binding site" evidence="1">
    <location>
        <begin position="82"/>
        <end position="85"/>
    </location>
    <ligand>
        <name>NADP(+)</name>
        <dbReference type="ChEBI" id="CHEBI:58349"/>
    </ligand>
</feature>
<feature type="binding site" evidence="1">
    <location>
        <position position="133"/>
    </location>
    <ligand>
        <name>NADP(+)</name>
        <dbReference type="ChEBI" id="CHEBI:58349"/>
    </ligand>
</feature>
<feature type="binding site" evidence="1">
    <location>
        <position position="190"/>
    </location>
    <ligand>
        <name>Mg(2+)</name>
        <dbReference type="ChEBI" id="CHEBI:18420"/>
        <label>1</label>
    </ligand>
</feature>
<feature type="binding site" evidence="1">
    <location>
        <position position="190"/>
    </location>
    <ligand>
        <name>Mg(2+)</name>
        <dbReference type="ChEBI" id="CHEBI:18420"/>
        <label>2</label>
    </ligand>
</feature>
<feature type="binding site" evidence="1">
    <location>
        <position position="194"/>
    </location>
    <ligand>
        <name>Mg(2+)</name>
        <dbReference type="ChEBI" id="CHEBI:18420"/>
        <label>1</label>
    </ligand>
</feature>
<feature type="binding site" evidence="1">
    <location>
        <position position="226"/>
    </location>
    <ligand>
        <name>Mg(2+)</name>
        <dbReference type="ChEBI" id="CHEBI:18420"/>
        <label>2</label>
    </ligand>
</feature>
<feature type="binding site" evidence="1">
    <location>
        <position position="230"/>
    </location>
    <ligand>
        <name>Mg(2+)</name>
        <dbReference type="ChEBI" id="CHEBI:18420"/>
        <label>2</label>
    </ligand>
</feature>
<feature type="binding site" evidence="1">
    <location>
        <position position="251"/>
    </location>
    <ligand>
        <name>substrate</name>
    </ligand>
</feature>
<dbReference type="EC" id="1.1.1.86" evidence="1"/>
<dbReference type="EMBL" id="BX950229">
    <property type="protein sequence ID" value="CAF30210.1"/>
    <property type="molecule type" value="Genomic_DNA"/>
</dbReference>
<dbReference type="RefSeq" id="WP_011170598.1">
    <property type="nucleotide sequence ID" value="NC_005791.1"/>
</dbReference>
<dbReference type="SMR" id="Q6LZH4"/>
<dbReference type="STRING" id="267377.MMP0654"/>
<dbReference type="EnsemblBacteria" id="CAF30210">
    <property type="protein sequence ID" value="CAF30210"/>
    <property type="gene ID" value="MMP0654"/>
</dbReference>
<dbReference type="GeneID" id="2762719"/>
<dbReference type="GeneID" id="36101419"/>
<dbReference type="KEGG" id="mmp:MMP0654"/>
<dbReference type="PATRIC" id="fig|267377.15.peg.671"/>
<dbReference type="eggNOG" id="arCOG04465">
    <property type="taxonomic scope" value="Archaea"/>
</dbReference>
<dbReference type="HOGENOM" id="CLU_033821_0_1_2"/>
<dbReference type="OrthoDB" id="6064at2157"/>
<dbReference type="UniPathway" id="UPA00047">
    <property type="reaction ID" value="UER00056"/>
</dbReference>
<dbReference type="UniPathway" id="UPA00049">
    <property type="reaction ID" value="UER00060"/>
</dbReference>
<dbReference type="Proteomes" id="UP000000590">
    <property type="component" value="Chromosome"/>
</dbReference>
<dbReference type="GO" id="GO:0004455">
    <property type="term" value="F:ketol-acid reductoisomerase activity"/>
    <property type="evidence" value="ECO:0007669"/>
    <property type="project" value="UniProtKB-UniRule"/>
</dbReference>
<dbReference type="GO" id="GO:0000287">
    <property type="term" value="F:magnesium ion binding"/>
    <property type="evidence" value="ECO:0007669"/>
    <property type="project" value="UniProtKB-UniRule"/>
</dbReference>
<dbReference type="GO" id="GO:0050661">
    <property type="term" value="F:NADP binding"/>
    <property type="evidence" value="ECO:0007669"/>
    <property type="project" value="InterPro"/>
</dbReference>
<dbReference type="GO" id="GO:0009097">
    <property type="term" value="P:isoleucine biosynthetic process"/>
    <property type="evidence" value="ECO:0007669"/>
    <property type="project" value="UniProtKB-UniRule"/>
</dbReference>
<dbReference type="GO" id="GO:0009099">
    <property type="term" value="P:L-valine biosynthetic process"/>
    <property type="evidence" value="ECO:0007669"/>
    <property type="project" value="UniProtKB-UniRule"/>
</dbReference>
<dbReference type="FunFam" id="3.40.50.720:FF:000023">
    <property type="entry name" value="Ketol-acid reductoisomerase (NADP(+))"/>
    <property type="match status" value="1"/>
</dbReference>
<dbReference type="Gene3D" id="6.10.240.10">
    <property type="match status" value="1"/>
</dbReference>
<dbReference type="Gene3D" id="3.40.50.720">
    <property type="entry name" value="NAD(P)-binding Rossmann-like Domain"/>
    <property type="match status" value="1"/>
</dbReference>
<dbReference type="HAMAP" id="MF_00435">
    <property type="entry name" value="IlvC"/>
    <property type="match status" value="1"/>
</dbReference>
<dbReference type="InterPro" id="IPR008927">
    <property type="entry name" value="6-PGluconate_DH-like_C_sf"/>
</dbReference>
<dbReference type="InterPro" id="IPR013023">
    <property type="entry name" value="KARI"/>
</dbReference>
<dbReference type="InterPro" id="IPR000506">
    <property type="entry name" value="KARI_C"/>
</dbReference>
<dbReference type="InterPro" id="IPR013116">
    <property type="entry name" value="KARI_N"/>
</dbReference>
<dbReference type="InterPro" id="IPR014359">
    <property type="entry name" value="KARI_prok"/>
</dbReference>
<dbReference type="InterPro" id="IPR036291">
    <property type="entry name" value="NAD(P)-bd_dom_sf"/>
</dbReference>
<dbReference type="NCBIfam" id="TIGR00465">
    <property type="entry name" value="ilvC"/>
    <property type="match status" value="1"/>
</dbReference>
<dbReference type="NCBIfam" id="NF004017">
    <property type="entry name" value="PRK05479.1"/>
    <property type="match status" value="1"/>
</dbReference>
<dbReference type="NCBIfam" id="NF009940">
    <property type="entry name" value="PRK13403.1"/>
    <property type="match status" value="1"/>
</dbReference>
<dbReference type="PANTHER" id="PTHR21371">
    <property type="entry name" value="KETOL-ACID REDUCTOISOMERASE, MITOCHONDRIAL"/>
    <property type="match status" value="1"/>
</dbReference>
<dbReference type="PANTHER" id="PTHR21371:SF1">
    <property type="entry name" value="KETOL-ACID REDUCTOISOMERASE, MITOCHONDRIAL"/>
    <property type="match status" value="1"/>
</dbReference>
<dbReference type="Pfam" id="PF01450">
    <property type="entry name" value="KARI_C"/>
    <property type="match status" value="1"/>
</dbReference>
<dbReference type="Pfam" id="PF07991">
    <property type="entry name" value="KARI_N"/>
    <property type="match status" value="1"/>
</dbReference>
<dbReference type="PIRSF" id="PIRSF000116">
    <property type="entry name" value="IlvC_gammaproteo"/>
    <property type="match status" value="1"/>
</dbReference>
<dbReference type="SUPFAM" id="SSF48179">
    <property type="entry name" value="6-phosphogluconate dehydrogenase C-terminal domain-like"/>
    <property type="match status" value="1"/>
</dbReference>
<dbReference type="SUPFAM" id="SSF51735">
    <property type="entry name" value="NAD(P)-binding Rossmann-fold domains"/>
    <property type="match status" value="1"/>
</dbReference>
<dbReference type="PROSITE" id="PS51851">
    <property type="entry name" value="KARI_C"/>
    <property type="match status" value="1"/>
</dbReference>
<dbReference type="PROSITE" id="PS51850">
    <property type="entry name" value="KARI_N"/>
    <property type="match status" value="1"/>
</dbReference>
<reference key="1">
    <citation type="journal article" date="2004" name="J. Bacteriol.">
        <title>Complete genome sequence of the genetically tractable hydrogenotrophic methanogen Methanococcus maripaludis.</title>
        <authorList>
            <person name="Hendrickson E.L."/>
            <person name="Kaul R."/>
            <person name="Zhou Y."/>
            <person name="Bovee D."/>
            <person name="Chapman P."/>
            <person name="Chung J."/>
            <person name="Conway de Macario E."/>
            <person name="Dodsworth J.A."/>
            <person name="Gillett W."/>
            <person name="Graham D.E."/>
            <person name="Hackett M."/>
            <person name="Haydock A.K."/>
            <person name="Kang A."/>
            <person name="Land M.L."/>
            <person name="Levy R."/>
            <person name="Lie T.J."/>
            <person name="Major T.A."/>
            <person name="Moore B.C."/>
            <person name="Porat I."/>
            <person name="Palmeiri A."/>
            <person name="Rouse G."/>
            <person name="Saenphimmachak C."/>
            <person name="Soell D."/>
            <person name="Van Dien S."/>
            <person name="Wang T."/>
            <person name="Whitman W.B."/>
            <person name="Xia Q."/>
            <person name="Zhang Y."/>
            <person name="Larimer F.W."/>
            <person name="Olson M.V."/>
            <person name="Leigh J.A."/>
        </authorList>
    </citation>
    <scope>NUCLEOTIDE SEQUENCE [LARGE SCALE GENOMIC DNA]</scope>
    <source>
        <strain>DSM 14266 / JCM 13030 / NBRC 101832 / S2 / LL</strain>
    </source>
</reference>
<organism>
    <name type="scientific">Methanococcus maripaludis (strain DSM 14266 / JCM 13030 / NBRC 101832 / S2 / LL)</name>
    <dbReference type="NCBI Taxonomy" id="267377"/>
    <lineage>
        <taxon>Archaea</taxon>
        <taxon>Methanobacteriati</taxon>
        <taxon>Methanobacteriota</taxon>
        <taxon>Methanomada group</taxon>
        <taxon>Methanococci</taxon>
        <taxon>Methanococcales</taxon>
        <taxon>Methanococcaceae</taxon>
        <taxon>Methanococcus</taxon>
    </lineage>
</organism>
<comment type="function">
    <text evidence="1">Involved in the biosynthesis of branched-chain amino acids (BCAA). Catalyzes an alkyl-migration followed by a ketol-acid reduction of (S)-2-acetolactate (S2AL) to yield (R)-2,3-dihydroxy-isovalerate. In the isomerase reaction, S2AL is rearranged via a Mg-dependent methyl migration to produce 3-hydroxy-3-methyl-2-ketobutyrate (HMKB). In the reductase reaction, this 2-ketoacid undergoes a metal-dependent reduction by NADPH to yield (R)-2,3-dihydroxy-isovalerate.</text>
</comment>
<comment type="catalytic activity">
    <reaction evidence="1">
        <text>(2R)-2,3-dihydroxy-3-methylbutanoate + NADP(+) = (2S)-2-acetolactate + NADPH + H(+)</text>
        <dbReference type="Rhea" id="RHEA:22068"/>
        <dbReference type="ChEBI" id="CHEBI:15378"/>
        <dbReference type="ChEBI" id="CHEBI:49072"/>
        <dbReference type="ChEBI" id="CHEBI:57783"/>
        <dbReference type="ChEBI" id="CHEBI:58349"/>
        <dbReference type="ChEBI" id="CHEBI:58476"/>
        <dbReference type="EC" id="1.1.1.86"/>
    </reaction>
</comment>
<comment type="catalytic activity">
    <reaction evidence="1">
        <text>(2R,3R)-2,3-dihydroxy-3-methylpentanoate + NADP(+) = (S)-2-ethyl-2-hydroxy-3-oxobutanoate + NADPH + H(+)</text>
        <dbReference type="Rhea" id="RHEA:13493"/>
        <dbReference type="ChEBI" id="CHEBI:15378"/>
        <dbReference type="ChEBI" id="CHEBI:49256"/>
        <dbReference type="ChEBI" id="CHEBI:49258"/>
        <dbReference type="ChEBI" id="CHEBI:57783"/>
        <dbReference type="ChEBI" id="CHEBI:58349"/>
        <dbReference type="EC" id="1.1.1.86"/>
    </reaction>
</comment>
<comment type="cofactor">
    <cofactor evidence="1">
        <name>Mg(2+)</name>
        <dbReference type="ChEBI" id="CHEBI:18420"/>
    </cofactor>
    <text evidence="1">Binds 2 magnesium ions per subunit.</text>
</comment>
<comment type="pathway">
    <text evidence="1">Amino-acid biosynthesis; L-isoleucine biosynthesis; L-isoleucine from 2-oxobutanoate: step 2/4.</text>
</comment>
<comment type="pathway">
    <text evidence="1">Amino-acid biosynthesis; L-valine biosynthesis; L-valine from pyruvate: step 2/4.</text>
</comment>
<comment type="similarity">
    <text evidence="1">Belongs to the ketol-acid reductoisomerase family.</text>
</comment>
<name>ILVC_METMP</name>
<gene>
    <name evidence="1" type="primary">ilvC</name>
    <name type="ordered locus">MMP0654</name>
</gene>
<keyword id="KW-0028">Amino-acid biosynthesis</keyword>
<keyword id="KW-0100">Branched-chain amino acid biosynthesis</keyword>
<keyword id="KW-0460">Magnesium</keyword>
<keyword id="KW-0479">Metal-binding</keyword>
<keyword id="KW-0521">NADP</keyword>
<keyword id="KW-0560">Oxidoreductase</keyword>
<keyword id="KW-1185">Reference proteome</keyword>
<evidence type="ECO:0000255" key="1">
    <source>
        <dbReference type="HAMAP-Rule" id="MF_00435"/>
    </source>
</evidence>
<evidence type="ECO:0000255" key="2">
    <source>
        <dbReference type="PROSITE-ProRule" id="PRU01197"/>
    </source>
</evidence>
<evidence type="ECO:0000255" key="3">
    <source>
        <dbReference type="PROSITE-ProRule" id="PRU01198"/>
    </source>
</evidence>
<accession>Q6LZH4</accession>
<proteinExistence type="inferred from homology"/>
<sequence>MKVFYDSDFKLDALKEKTIAVIGYGSQGRAQSLNMKDSGLNVVVGLRKNGASWNNAKADGHNVMTIEEAAEKADIIHILIPDELQAEVYESQIKPYLKEGKTLSFSHGFNIHYGFIVPPKGVNVVLVAPKSPGKMVRRTYEEGFGVPGLICIEIDATNNAFDIVSAMAKGIGLSRAGVIQTTFKEETETDLFGEQAVLCGGVTELIKAGFETLVEAGYAPEMAYFETCHELKLIVDLIYQKGFKNMWNDVSNTAEYGGLTRRSRIVTADSKAAMKEILREIQDGRFTKEFLLEKQVSYAHLKSMRRLEGDLQIEEVGAKLRKMCGLEKEE</sequence>